<name>SP5G_BACC7</name>
<sequence>MEVTDVRLRRVNTEGRMRAIASITLDHEFVVHDIRVIDGNNGLFVAMPSKRTPDGEFRDIAHPINSGTRSKIQDAVLTEYHRLGELEEVEFEEAGAS</sequence>
<gene>
    <name evidence="1" type="primary">spoVG</name>
    <name type="ordered locus">BCAH187_A0057</name>
</gene>
<organism>
    <name type="scientific">Bacillus cereus (strain AH187)</name>
    <dbReference type="NCBI Taxonomy" id="405534"/>
    <lineage>
        <taxon>Bacteria</taxon>
        <taxon>Bacillati</taxon>
        <taxon>Bacillota</taxon>
        <taxon>Bacilli</taxon>
        <taxon>Bacillales</taxon>
        <taxon>Bacillaceae</taxon>
        <taxon>Bacillus</taxon>
        <taxon>Bacillus cereus group</taxon>
    </lineage>
</organism>
<evidence type="ECO:0000255" key="1">
    <source>
        <dbReference type="HAMAP-Rule" id="MF_00819"/>
    </source>
</evidence>
<keyword id="KW-0131">Cell cycle</keyword>
<keyword id="KW-0132">Cell division</keyword>
<keyword id="KW-0717">Septation</keyword>
<keyword id="KW-0749">Sporulation</keyword>
<proteinExistence type="inferred from homology"/>
<feature type="chain" id="PRO_1000196487" description="Putative septation protein SpoVG">
    <location>
        <begin position="1"/>
        <end position="97"/>
    </location>
</feature>
<accession>B7HPV9</accession>
<dbReference type="EMBL" id="CP001177">
    <property type="protein sequence ID" value="ACJ80758.1"/>
    <property type="molecule type" value="Genomic_DNA"/>
</dbReference>
<dbReference type="SMR" id="B7HPV9"/>
<dbReference type="KEGG" id="bcr:BCAH187_A0057"/>
<dbReference type="HOGENOM" id="CLU_103669_2_1_9"/>
<dbReference type="Proteomes" id="UP000002214">
    <property type="component" value="Chromosome"/>
</dbReference>
<dbReference type="GO" id="GO:0030436">
    <property type="term" value="P:asexual sporulation"/>
    <property type="evidence" value="ECO:0007669"/>
    <property type="project" value="UniProtKB-UniRule"/>
</dbReference>
<dbReference type="GO" id="GO:0000917">
    <property type="term" value="P:division septum assembly"/>
    <property type="evidence" value="ECO:0007669"/>
    <property type="project" value="UniProtKB-KW"/>
</dbReference>
<dbReference type="GO" id="GO:0030435">
    <property type="term" value="P:sporulation resulting in formation of a cellular spore"/>
    <property type="evidence" value="ECO:0007669"/>
    <property type="project" value="UniProtKB-KW"/>
</dbReference>
<dbReference type="FunFam" id="3.30.1120.40:FF:000001">
    <property type="entry name" value="Putative septation protein SpoVG"/>
    <property type="match status" value="1"/>
</dbReference>
<dbReference type="Gene3D" id="3.30.1120.40">
    <property type="entry name" value="Stage V sporulation protein G"/>
    <property type="match status" value="1"/>
</dbReference>
<dbReference type="HAMAP" id="MF_00819">
    <property type="entry name" value="SpoVG"/>
    <property type="match status" value="1"/>
</dbReference>
<dbReference type="InterPro" id="IPR007170">
    <property type="entry name" value="SpoVG"/>
</dbReference>
<dbReference type="InterPro" id="IPR036751">
    <property type="entry name" value="SpoVG_sf"/>
</dbReference>
<dbReference type="NCBIfam" id="NF009749">
    <property type="entry name" value="PRK13259.1"/>
    <property type="match status" value="1"/>
</dbReference>
<dbReference type="PANTHER" id="PTHR38429">
    <property type="entry name" value="SEPTATION PROTEIN SPOVG-RELATED"/>
    <property type="match status" value="1"/>
</dbReference>
<dbReference type="PANTHER" id="PTHR38429:SF1">
    <property type="entry name" value="SEPTATION PROTEIN SPOVG-RELATED"/>
    <property type="match status" value="1"/>
</dbReference>
<dbReference type="Pfam" id="PF04026">
    <property type="entry name" value="SpoVG"/>
    <property type="match status" value="1"/>
</dbReference>
<dbReference type="SUPFAM" id="SSF160537">
    <property type="entry name" value="SpoVG-like"/>
    <property type="match status" value="1"/>
</dbReference>
<protein>
    <recommendedName>
        <fullName evidence="1">Putative septation protein SpoVG</fullName>
    </recommendedName>
    <alternativeName>
        <fullName evidence="1">Stage V sporulation protein G</fullName>
    </alternativeName>
</protein>
<comment type="function">
    <text evidence="1">Essential for sporulation. Interferes with or is a negative regulator of the pathway leading to asymmetric septation.</text>
</comment>
<comment type="similarity">
    <text evidence="1">Belongs to the SpoVG family.</text>
</comment>
<reference key="1">
    <citation type="submission" date="2008-10" db="EMBL/GenBank/DDBJ databases">
        <title>Genome sequence of Bacillus cereus AH187.</title>
        <authorList>
            <person name="Dodson R.J."/>
            <person name="Durkin A.S."/>
            <person name="Rosovitz M.J."/>
            <person name="Rasko D.A."/>
            <person name="Kolsto A.B."/>
            <person name="Okstad O.A."/>
            <person name="Ravel J."/>
            <person name="Sutton G."/>
        </authorList>
    </citation>
    <scope>NUCLEOTIDE SEQUENCE [LARGE SCALE GENOMIC DNA]</scope>
    <source>
        <strain>AH187</strain>
    </source>
</reference>